<keyword id="KW-0963">Cytoplasm</keyword>
<keyword id="KW-0489">Methyltransferase</keyword>
<keyword id="KW-1185">Reference proteome</keyword>
<keyword id="KW-0694">RNA-binding</keyword>
<keyword id="KW-0698">rRNA processing</keyword>
<keyword id="KW-0949">S-adenosyl-L-methionine</keyword>
<keyword id="KW-0808">Transferase</keyword>
<reference key="1">
    <citation type="submission" date="2006-12" db="EMBL/GenBank/DDBJ databases">
        <title>Complete sequence of Chlorobium phaeobacteroides DSM 266.</title>
        <authorList>
            <consortium name="US DOE Joint Genome Institute"/>
            <person name="Copeland A."/>
            <person name="Lucas S."/>
            <person name="Lapidus A."/>
            <person name="Barry K."/>
            <person name="Detter J.C."/>
            <person name="Glavina del Rio T."/>
            <person name="Hammon N."/>
            <person name="Israni S."/>
            <person name="Pitluck S."/>
            <person name="Goltsman E."/>
            <person name="Schmutz J."/>
            <person name="Larimer F."/>
            <person name="Land M."/>
            <person name="Hauser L."/>
            <person name="Mikhailova N."/>
            <person name="Li T."/>
            <person name="Overmann J."/>
            <person name="Bryant D.A."/>
            <person name="Richardson P."/>
        </authorList>
    </citation>
    <scope>NUCLEOTIDE SEQUENCE [LARGE SCALE GENOMIC DNA]</scope>
    <source>
        <strain>DSM 266 / SMG 266 / 2430</strain>
    </source>
</reference>
<gene>
    <name evidence="1" type="primary">rsmA</name>
    <name evidence="1" type="synonym">ksgA</name>
    <name type="ordered locus">Cpha266_1169</name>
</gene>
<accession>A1BFM9</accession>
<comment type="function">
    <text evidence="1">Specifically dimethylates two adjacent adenosines (A1518 and A1519) in the loop of a conserved hairpin near the 3'-end of 16S rRNA in the 30S particle. May play a critical role in biogenesis of 30S subunits.</text>
</comment>
<comment type="catalytic activity">
    <reaction evidence="1">
        <text>adenosine(1518)/adenosine(1519) in 16S rRNA + 4 S-adenosyl-L-methionine = N(6)-dimethyladenosine(1518)/N(6)-dimethyladenosine(1519) in 16S rRNA + 4 S-adenosyl-L-homocysteine + 4 H(+)</text>
        <dbReference type="Rhea" id="RHEA:19609"/>
        <dbReference type="Rhea" id="RHEA-COMP:10232"/>
        <dbReference type="Rhea" id="RHEA-COMP:10233"/>
        <dbReference type="ChEBI" id="CHEBI:15378"/>
        <dbReference type="ChEBI" id="CHEBI:57856"/>
        <dbReference type="ChEBI" id="CHEBI:59789"/>
        <dbReference type="ChEBI" id="CHEBI:74411"/>
        <dbReference type="ChEBI" id="CHEBI:74493"/>
        <dbReference type="EC" id="2.1.1.182"/>
    </reaction>
</comment>
<comment type="subcellular location">
    <subcellularLocation>
        <location evidence="1">Cytoplasm</location>
    </subcellularLocation>
</comment>
<comment type="similarity">
    <text evidence="1">Belongs to the class I-like SAM-binding methyltransferase superfamily. rRNA adenine N(6)-methyltransferase family. RsmA subfamily.</text>
</comment>
<protein>
    <recommendedName>
        <fullName evidence="1">Ribosomal RNA small subunit methyltransferase A</fullName>
        <ecNumber evidence="1">2.1.1.182</ecNumber>
    </recommendedName>
    <alternativeName>
        <fullName evidence="1">16S rRNA (adenine(1518)-N(6)/adenine(1519)-N(6))-dimethyltransferase</fullName>
    </alternativeName>
    <alternativeName>
        <fullName evidence="1">16S rRNA dimethyladenosine transferase</fullName>
    </alternativeName>
    <alternativeName>
        <fullName evidence="1">16S rRNA dimethylase</fullName>
    </alternativeName>
    <alternativeName>
        <fullName evidence="1">S-adenosylmethionine-6-N', N'-adenosyl(rRNA) dimethyltransferase</fullName>
    </alternativeName>
</protein>
<organism>
    <name type="scientific">Chlorobium phaeobacteroides (strain DSM 266 / SMG 266 / 2430)</name>
    <dbReference type="NCBI Taxonomy" id="290317"/>
    <lineage>
        <taxon>Bacteria</taxon>
        <taxon>Pseudomonadati</taxon>
        <taxon>Chlorobiota</taxon>
        <taxon>Chlorobiia</taxon>
        <taxon>Chlorobiales</taxon>
        <taxon>Chlorobiaceae</taxon>
        <taxon>Chlorobium/Pelodictyon group</taxon>
        <taxon>Chlorobium</taxon>
    </lineage>
</organism>
<sequence>MIKVEYKHTEIAVKKKLGQNFLTDRNITRKIVTESETNPDDTILEIGPGFGALTREISTITPRFTVVEKDPKLASFIRNEYPELTVIEGDFLTVDLKKIAGEKPLRVLGNIPYAITSPILFKLLENRHILLSATLMMQHEVALRITAKPRTKDYGILAVQMQAFCETKYLFRVGRKVFRPQPGVDSAVISMKPKVNDPVSDREGFSRFVRCAFHQRRKTLQNNLKKTYELDRVESSVLKQRAEELSIDEFFRLFEQIRPLMVSSADPES</sequence>
<dbReference type="EC" id="2.1.1.182" evidence="1"/>
<dbReference type="EMBL" id="CP000492">
    <property type="protein sequence ID" value="ABL65206.1"/>
    <property type="molecule type" value="Genomic_DNA"/>
</dbReference>
<dbReference type="RefSeq" id="WP_011745030.1">
    <property type="nucleotide sequence ID" value="NC_008639.1"/>
</dbReference>
<dbReference type="SMR" id="A1BFM9"/>
<dbReference type="STRING" id="290317.Cpha266_1169"/>
<dbReference type="KEGG" id="cph:Cpha266_1169"/>
<dbReference type="eggNOG" id="COG0030">
    <property type="taxonomic scope" value="Bacteria"/>
</dbReference>
<dbReference type="HOGENOM" id="CLU_041220_0_1_10"/>
<dbReference type="OrthoDB" id="9814755at2"/>
<dbReference type="Proteomes" id="UP000008701">
    <property type="component" value="Chromosome"/>
</dbReference>
<dbReference type="GO" id="GO:0005829">
    <property type="term" value="C:cytosol"/>
    <property type="evidence" value="ECO:0007669"/>
    <property type="project" value="TreeGrafter"/>
</dbReference>
<dbReference type="GO" id="GO:0052908">
    <property type="term" value="F:16S rRNA (adenine(1518)-N(6)/adenine(1519)-N(6))-dimethyltransferase activity"/>
    <property type="evidence" value="ECO:0007669"/>
    <property type="project" value="UniProtKB-EC"/>
</dbReference>
<dbReference type="GO" id="GO:0003723">
    <property type="term" value="F:RNA binding"/>
    <property type="evidence" value="ECO:0007669"/>
    <property type="project" value="UniProtKB-KW"/>
</dbReference>
<dbReference type="CDD" id="cd02440">
    <property type="entry name" value="AdoMet_MTases"/>
    <property type="match status" value="1"/>
</dbReference>
<dbReference type="Gene3D" id="1.10.8.100">
    <property type="entry name" value="Ribosomal RNA adenine dimethylase-like, domain 2"/>
    <property type="match status" value="1"/>
</dbReference>
<dbReference type="Gene3D" id="3.40.50.150">
    <property type="entry name" value="Vaccinia Virus protein VP39"/>
    <property type="match status" value="1"/>
</dbReference>
<dbReference type="HAMAP" id="MF_00607">
    <property type="entry name" value="16SrRNA_methyltr_A"/>
    <property type="match status" value="1"/>
</dbReference>
<dbReference type="InterPro" id="IPR001737">
    <property type="entry name" value="KsgA/Erm"/>
</dbReference>
<dbReference type="InterPro" id="IPR023165">
    <property type="entry name" value="rRNA_Ade_diMease-like_C"/>
</dbReference>
<dbReference type="InterPro" id="IPR020596">
    <property type="entry name" value="rRNA_Ade_Mease_Trfase_CS"/>
</dbReference>
<dbReference type="InterPro" id="IPR020598">
    <property type="entry name" value="rRNA_Ade_methylase_Trfase_N"/>
</dbReference>
<dbReference type="InterPro" id="IPR011530">
    <property type="entry name" value="rRNA_adenine_dimethylase"/>
</dbReference>
<dbReference type="InterPro" id="IPR029063">
    <property type="entry name" value="SAM-dependent_MTases_sf"/>
</dbReference>
<dbReference type="NCBIfam" id="TIGR00755">
    <property type="entry name" value="ksgA"/>
    <property type="match status" value="1"/>
</dbReference>
<dbReference type="PANTHER" id="PTHR11727">
    <property type="entry name" value="DIMETHYLADENOSINE TRANSFERASE"/>
    <property type="match status" value="1"/>
</dbReference>
<dbReference type="PANTHER" id="PTHR11727:SF7">
    <property type="entry name" value="DIMETHYLADENOSINE TRANSFERASE-RELATED"/>
    <property type="match status" value="1"/>
</dbReference>
<dbReference type="Pfam" id="PF00398">
    <property type="entry name" value="RrnaAD"/>
    <property type="match status" value="1"/>
</dbReference>
<dbReference type="SMART" id="SM00650">
    <property type="entry name" value="rADc"/>
    <property type="match status" value="1"/>
</dbReference>
<dbReference type="SUPFAM" id="SSF53335">
    <property type="entry name" value="S-adenosyl-L-methionine-dependent methyltransferases"/>
    <property type="match status" value="1"/>
</dbReference>
<dbReference type="PROSITE" id="PS01131">
    <property type="entry name" value="RRNA_A_DIMETH"/>
    <property type="match status" value="1"/>
</dbReference>
<dbReference type="PROSITE" id="PS51689">
    <property type="entry name" value="SAM_RNA_A_N6_MT"/>
    <property type="match status" value="1"/>
</dbReference>
<evidence type="ECO:0000255" key="1">
    <source>
        <dbReference type="HAMAP-Rule" id="MF_00607"/>
    </source>
</evidence>
<feature type="chain" id="PRO_1000056610" description="Ribosomal RNA small subunit methyltransferase A">
    <location>
        <begin position="1"/>
        <end position="269"/>
    </location>
</feature>
<feature type="binding site" evidence="1">
    <location>
        <position position="20"/>
    </location>
    <ligand>
        <name>S-adenosyl-L-methionine</name>
        <dbReference type="ChEBI" id="CHEBI:59789"/>
    </ligand>
</feature>
<feature type="binding site" evidence="1">
    <location>
        <position position="22"/>
    </location>
    <ligand>
        <name>S-adenosyl-L-methionine</name>
        <dbReference type="ChEBI" id="CHEBI:59789"/>
    </ligand>
</feature>
<feature type="binding site" evidence="1">
    <location>
        <position position="47"/>
    </location>
    <ligand>
        <name>S-adenosyl-L-methionine</name>
        <dbReference type="ChEBI" id="CHEBI:59789"/>
    </ligand>
</feature>
<feature type="binding site" evidence="1">
    <location>
        <position position="68"/>
    </location>
    <ligand>
        <name>S-adenosyl-L-methionine</name>
        <dbReference type="ChEBI" id="CHEBI:59789"/>
    </ligand>
</feature>
<feature type="binding site" evidence="1">
    <location>
        <position position="90"/>
    </location>
    <ligand>
        <name>S-adenosyl-L-methionine</name>
        <dbReference type="ChEBI" id="CHEBI:59789"/>
    </ligand>
</feature>
<feature type="binding site" evidence="1">
    <location>
        <position position="110"/>
    </location>
    <ligand>
        <name>S-adenosyl-L-methionine</name>
        <dbReference type="ChEBI" id="CHEBI:59789"/>
    </ligand>
</feature>
<proteinExistence type="inferred from homology"/>
<name>RSMA_CHLPD</name>